<evidence type="ECO:0000305" key="1"/>
<gene>
    <name type="ordered locus">UNCMA_09870</name>
    <name type="ORF">RCIX2131</name>
</gene>
<sequence length="79" mass="8858">MKEEEIIDAVYQAVVDHIYSVVPAKRIADLDISIGIEGRDLTIDITLVTDRTQEIDQKTIEEAIKVATEKADELMAKND</sequence>
<name>Y987_METAR</name>
<feature type="chain" id="PRO_0000293131" description="Uncharacterized protein UNCMA_09870">
    <location>
        <begin position="1"/>
        <end position="79"/>
    </location>
</feature>
<reference key="1">
    <citation type="journal article" date="2006" name="Science">
        <title>Genome of rice cluster I archaea -- the key methane producers in the rice rhizosphere.</title>
        <authorList>
            <person name="Erkel C."/>
            <person name="Kube M."/>
            <person name="Reinhardt R."/>
            <person name="Liesack W."/>
        </authorList>
    </citation>
    <scope>NUCLEOTIDE SEQUENCE [LARGE SCALE GENOMIC DNA]</scope>
    <source>
        <strain>DSM 22066 / NBRC 105507 / MRE50</strain>
    </source>
</reference>
<organism>
    <name type="scientific">Methanocella arvoryzae (strain DSM 22066 / NBRC 105507 / MRE50)</name>
    <dbReference type="NCBI Taxonomy" id="351160"/>
    <lineage>
        <taxon>Archaea</taxon>
        <taxon>Methanobacteriati</taxon>
        <taxon>Methanobacteriota</taxon>
        <taxon>Stenosarchaea group</taxon>
        <taxon>Methanomicrobia</taxon>
        <taxon>Methanocellales</taxon>
        <taxon>Methanocellaceae</taxon>
        <taxon>Methanocella</taxon>
    </lineage>
</organism>
<accession>Q0W2Y2</accession>
<keyword id="KW-1185">Reference proteome</keyword>
<protein>
    <recommendedName>
        <fullName>Uncharacterized protein UNCMA_09870</fullName>
    </recommendedName>
</protein>
<comment type="similarity">
    <text evidence="1">Belongs to the UPF0440 family.</text>
</comment>
<proteinExistence type="inferred from homology"/>
<dbReference type="EMBL" id="AM114193">
    <property type="protein sequence ID" value="CAJ37261.1"/>
    <property type="molecule type" value="Genomic_DNA"/>
</dbReference>
<dbReference type="RefSeq" id="WP_012035315.1">
    <property type="nucleotide sequence ID" value="NC_009464.1"/>
</dbReference>
<dbReference type="SMR" id="Q0W2Y2"/>
<dbReference type="STRING" id="351160.RCIX2131"/>
<dbReference type="GeneID" id="5143070"/>
<dbReference type="KEGG" id="rci:RCIX2131"/>
<dbReference type="eggNOG" id="arCOG11671">
    <property type="taxonomic scope" value="Archaea"/>
</dbReference>
<dbReference type="OrthoDB" id="147360at2157"/>
<dbReference type="Proteomes" id="UP000000663">
    <property type="component" value="Chromosome"/>
</dbReference>
<dbReference type="Gene3D" id="3.30.300.100">
    <property type="entry name" value="MTH677-like"/>
    <property type="match status" value="1"/>
</dbReference>
<dbReference type="InterPro" id="IPR024502">
    <property type="entry name" value="DUF3194"/>
</dbReference>
<dbReference type="InterPro" id="IPR035954">
    <property type="entry name" value="MTH677-like_sf"/>
</dbReference>
<dbReference type="Pfam" id="PF11419">
    <property type="entry name" value="DUF3194"/>
    <property type="match status" value="1"/>
</dbReference>